<proteinExistence type="predicted"/>
<sequence>MLKLARPFIPPLSRNNAISSGIVLTSRRFQSSFTFLSNQSLLSKNQMKSKRKKGSKKAAYHRQPPEHEHTAPLIKQNKTITKKEHSDVRGSHLKKKRSDFSWLPRVPSTSHLKQSDMTTNVLYSGYRPLFINPNDPKLKEDTGSTLYEFAMKLEDLNEPLSPWISSATGLEFFSEWENIPSELLKNLKPFHPPKEKSMNTNELIHVSAKRNTLVDNKTSETLQRKMDEFSKRRGKGRKKSVVTLLQMKKKLEG</sequence>
<gene>
    <name type="primary">PET20</name>
    <name type="ordered locus">YPL159C</name>
    <name type="ORF">P2567</name>
</gene>
<feature type="transit peptide" description="Mitochondrion" evidence="1">
    <location>
        <begin position="1"/>
        <end position="36"/>
    </location>
</feature>
<feature type="chain" id="PRO_0000240390" description="Protein PET20, mitochondrial">
    <location>
        <begin position="37"/>
        <end position="253"/>
    </location>
</feature>
<feature type="region of interest" description="Disordered" evidence="2">
    <location>
        <begin position="44"/>
        <end position="93"/>
    </location>
</feature>
<feature type="compositionally biased region" description="Basic residues" evidence="2">
    <location>
        <begin position="47"/>
        <end position="60"/>
    </location>
</feature>
<feature type="compositionally biased region" description="Basic and acidic residues" evidence="2">
    <location>
        <begin position="81"/>
        <end position="90"/>
    </location>
</feature>
<dbReference type="EMBL" id="X96770">
    <property type="protein sequence ID" value="CAA65562.1"/>
    <property type="molecule type" value="Genomic_DNA"/>
</dbReference>
<dbReference type="EMBL" id="Z73515">
    <property type="protein sequence ID" value="CAA97864.1"/>
    <property type="molecule type" value="Genomic_DNA"/>
</dbReference>
<dbReference type="EMBL" id="BK006949">
    <property type="protein sequence ID" value="DAA11275.1"/>
    <property type="molecule type" value="Genomic_DNA"/>
</dbReference>
<dbReference type="PIR" id="S65170">
    <property type="entry name" value="S65170"/>
</dbReference>
<dbReference type="RefSeq" id="NP_015166.1">
    <property type="nucleotide sequence ID" value="NM_001183973.1"/>
</dbReference>
<dbReference type="BioGRID" id="36024">
    <property type="interactions" value="187"/>
</dbReference>
<dbReference type="DIP" id="DIP-3991N"/>
<dbReference type="FunCoup" id="Q99373">
    <property type="interactions" value="46"/>
</dbReference>
<dbReference type="IntAct" id="Q99373">
    <property type="interactions" value="2"/>
</dbReference>
<dbReference type="STRING" id="4932.YPL159C"/>
<dbReference type="GlyGen" id="Q99373">
    <property type="glycosylation" value="2 sites, 1 O-linked glycan (2 sites)"/>
</dbReference>
<dbReference type="iPTMnet" id="Q99373"/>
<dbReference type="PaxDb" id="4932-YPL159C"/>
<dbReference type="PeptideAtlas" id="Q99373"/>
<dbReference type="EnsemblFungi" id="YPL159C_mRNA">
    <property type="protein sequence ID" value="YPL159C"/>
    <property type="gene ID" value="YPL159C"/>
</dbReference>
<dbReference type="GeneID" id="855944"/>
<dbReference type="KEGG" id="sce:YPL159C"/>
<dbReference type="AGR" id="SGD:S000006080"/>
<dbReference type="SGD" id="S000006080">
    <property type="gene designation" value="PET20"/>
</dbReference>
<dbReference type="VEuPathDB" id="FungiDB:YPL159C"/>
<dbReference type="eggNOG" id="ENOG502S1JN">
    <property type="taxonomic scope" value="Eukaryota"/>
</dbReference>
<dbReference type="HOGENOM" id="CLU_074423_0_0_1"/>
<dbReference type="InParanoid" id="Q99373"/>
<dbReference type="OMA" id="DPLPWIS"/>
<dbReference type="OrthoDB" id="4056195at2759"/>
<dbReference type="BioCyc" id="YEAST:G3O-34055-MONOMER"/>
<dbReference type="BioGRID-ORCS" id="855944">
    <property type="hits" value="1 hit in 10 CRISPR screens"/>
</dbReference>
<dbReference type="PRO" id="PR:Q99373"/>
<dbReference type="Proteomes" id="UP000002311">
    <property type="component" value="Chromosome XVI"/>
</dbReference>
<dbReference type="RNAct" id="Q99373">
    <property type="molecule type" value="protein"/>
</dbReference>
<dbReference type="GO" id="GO:0005739">
    <property type="term" value="C:mitochondrion"/>
    <property type="evidence" value="ECO:0000314"/>
    <property type="project" value="SGD"/>
</dbReference>
<dbReference type="GO" id="GO:0009060">
    <property type="term" value="P:aerobic respiration"/>
    <property type="evidence" value="ECO:0000315"/>
    <property type="project" value="SGD"/>
</dbReference>
<dbReference type="InterPro" id="IPR014804">
    <property type="entry name" value="Pet20-like"/>
</dbReference>
<dbReference type="Pfam" id="PF08692">
    <property type="entry name" value="Pet20"/>
    <property type="match status" value="2"/>
</dbReference>
<keyword id="KW-0496">Mitochondrion</keyword>
<keyword id="KW-1185">Reference proteome</keyword>
<keyword id="KW-0809">Transit peptide</keyword>
<comment type="function">
    <text evidence="3">Required for respiratory growth, stability of the mitochondrial genome and for proper assembly or maintenance of mitochondrial proteins.</text>
</comment>
<comment type="subcellular location">
    <subcellularLocation>
        <location evidence="3">Mitochondrion</location>
    </subcellularLocation>
</comment>
<reference key="1">
    <citation type="journal article" date="1996" name="Yeast">
        <title>The sequence of 55 kb on the left arm of yeast chromosome XVI identifies a small nuclear RNA, a new putative protein kinase and two new putative regulators.</title>
        <authorList>
            <person name="Purnelle B."/>
            <person name="Coster F."/>
            <person name="Goffeau A."/>
        </authorList>
    </citation>
    <scope>NUCLEOTIDE SEQUENCE [GENOMIC DNA]</scope>
    <source>
        <strain>ATCC 204511 / S288c / AB972</strain>
    </source>
</reference>
<reference key="2">
    <citation type="journal article" date="1997" name="Nature">
        <title>The nucleotide sequence of Saccharomyces cerevisiae chromosome XVI.</title>
        <authorList>
            <person name="Bussey H."/>
            <person name="Storms R.K."/>
            <person name="Ahmed A."/>
            <person name="Albermann K."/>
            <person name="Allen E."/>
            <person name="Ansorge W."/>
            <person name="Araujo R."/>
            <person name="Aparicio A."/>
            <person name="Barrell B.G."/>
            <person name="Badcock K."/>
            <person name="Benes V."/>
            <person name="Botstein D."/>
            <person name="Bowman S."/>
            <person name="Brueckner M."/>
            <person name="Carpenter J."/>
            <person name="Cherry J.M."/>
            <person name="Chung E."/>
            <person name="Churcher C.M."/>
            <person name="Coster F."/>
            <person name="Davis K."/>
            <person name="Davis R.W."/>
            <person name="Dietrich F.S."/>
            <person name="Delius H."/>
            <person name="DiPaolo T."/>
            <person name="Dubois E."/>
            <person name="Duesterhoeft A."/>
            <person name="Duncan M."/>
            <person name="Floeth M."/>
            <person name="Fortin N."/>
            <person name="Friesen J.D."/>
            <person name="Fritz C."/>
            <person name="Goffeau A."/>
            <person name="Hall J."/>
            <person name="Hebling U."/>
            <person name="Heumann K."/>
            <person name="Hilbert H."/>
            <person name="Hillier L.W."/>
            <person name="Hunicke-Smith S."/>
            <person name="Hyman R.W."/>
            <person name="Johnston M."/>
            <person name="Kalman S."/>
            <person name="Kleine K."/>
            <person name="Komp C."/>
            <person name="Kurdi O."/>
            <person name="Lashkari D."/>
            <person name="Lew H."/>
            <person name="Lin A."/>
            <person name="Lin D."/>
            <person name="Louis E.J."/>
            <person name="Marathe R."/>
            <person name="Messenguy F."/>
            <person name="Mewes H.-W."/>
            <person name="Mirtipati S."/>
            <person name="Moestl D."/>
            <person name="Mueller-Auer S."/>
            <person name="Namath A."/>
            <person name="Nentwich U."/>
            <person name="Oefner P."/>
            <person name="Pearson D."/>
            <person name="Petel F.X."/>
            <person name="Pohl T.M."/>
            <person name="Purnelle B."/>
            <person name="Rajandream M.A."/>
            <person name="Rechmann S."/>
            <person name="Rieger M."/>
            <person name="Riles L."/>
            <person name="Roberts D."/>
            <person name="Schaefer M."/>
            <person name="Scharfe M."/>
            <person name="Scherens B."/>
            <person name="Schramm S."/>
            <person name="Schroeder M."/>
            <person name="Sdicu A.-M."/>
            <person name="Tettelin H."/>
            <person name="Urrestarazu L.A."/>
            <person name="Ushinsky S."/>
            <person name="Vierendeels F."/>
            <person name="Vissers S."/>
            <person name="Voss H."/>
            <person name="Walsh S.V."/>
            <person name="Wambutt R."/>
            <person name="Wang Y."/>
            <person name="Wedler E."/>
            <person name="Wedler H."/>
            <person name="Winnett E."/>
            <person name="Zhong W.-W."/>
            <person name="Zollner A."/>
            <person name="Vo D.H."/>
            <person name="Hani J."/>
        </authorList>
    </citation>
    <scope>NUCLEOTIDE SEQUENCE [LARGE SCALE GENOMIC DNA]</scope>
    <source>
        <strain>ATCC 204508 / S288c</strain>
    </source>
</reference>
<reference key="3">
    <citation type="journal article" date="2014" name="G3 (Bethesda)">
        <title>The reference genome sequence of Saccharomyces cerevisiae: Then and now.</title>
        <authorList>
            <person name="Engel S.R."/>
            <person name="Dietrich F.S."/>
            <person name="Fisk D.G."/>
            <person name="Binkley G."/>
            <person name="Balakrishnan R."/>
            <person name="Costanzo M.C."/>
            <person name="Dwight S.S."/>
            <person name="Hitz B.C."/>
            <person name="Karra K."/>
            <person name="Nash R.S."/>
            <person name="Weng S."/>
            <person name="Wong E.D."/>
            <person name="Lloyd P."/>
            <person name="Skrzypek M.S."/>
            <person name="Miyasato S.R."/>
            <person name="Simison M."/>
            <person name="Cherry J.M."/>
        </authorList>
    </citation>
    <scope>GENOME REANNOTATION</scope>
    <source>
        <strain>ATCC 204508 / S288c</strain>
    </source>
</reference>
<reference key="4">
    <citation type="journal article" date="2006" name="Yeast">
        <title>Phenotypes of yeast mutants lacking the mitochondrial protein Pet20p.</title>
        <authorList>
            <person name="Polevoda B."/>
            <person name="Panciera Y."/>
            <person name="Brown S.P."/>
            <person name="Wei J."/>
            <person name="Sherman F."/>
        </authorList>
    </citation>
    <scope>FUNCTION</scope>
    <scope>SUBCELLULAR LOCATION</scope>
</reference>
<protein>
    <recommendedName>
        <fullName>Protein PET20, mitochondrial</fullName>
    </recommendedName>
    <alternativeName>
        <fullName>Petite colonies protein 20</fullName>
    </alternativeName>
</protein>
<organism>
    <name type="scientific">Saccharomyces cerevisiae (strain ATCC 204508 / S288c)</name>
    <name type="common">Baker's yeast</name>
    <dbReference type="NCBI Taxonomy" id="559292"/>
    <lineage>
        <taxon>Eukaryota</taxon>
        <taxon>Fungi</taxon>
        <taxon>Dikarya</taxon>
        <taxon>Ascomycota</taxon>
        <taxon>Saccharomycotina</taxon>
        <taxon>Saccharomycetes</taxon>
        <taxon>Saccharomycetales</taxon>
        <taxon>Saccharomycetaceae</taxon>
        <taxon>Saccharomyces</taxon>
    </lineage>
</organism>
<evidence type="ECO:0000255" key="1"/>
<evidence type="ECO:0000256" key="2">
    <source>
        <dbReference type="SAM" id="MobiDB-lite"/>
    </source>
</evidence>
<evidence type="ECO:0000269" key="3">
    <source>
    </source>
</evidence>
<name>PET20_YEAST</name>
<accession>Q99373</accession>
<accession>D6W3K9</accession>